<name>MAP11_DANRE</name>
<sequence>MAAVETRECETEGCHSEAKLQCPTCIKLGIQGSYFCSQECFKGSWATHKLLHKKAKEDKTNDEEKNCVEKEVNTDPWPGYRYTGKLRPYYPLTPMRLVPSNIQRPDYADHPLGMSESEQTMKGTSQIKILNAEEIEGMRVVCKLAREVLDIAAMMVKPGVTTEEIDHAVHLACTARNCYPSPLNYYNFPKSCCTSVNEVICHGIPDRRHLQEGDILNIDITVYHNGYHGDLNETFFVGEVDEGAKRLVQTTYECLMQAIDSVKPGIRYRELGNIIQKHAQANGFSVVRSYCGHGIHKLFHTAPNVPHYAKNKAVGVMKPGHVFTIEPMICEGGWQDETWPDGWTAVTRDGKRSAQFEHTLLVTETGCEILTRRLEDNGRAHFLSQM</sequence>
<reference key="1">
    <citation type="submission" date="2005-06" db="EMBL/GenBank/DDBJ databases">
        <authorList>
            <consortium name="NIH - Zebrafish Gene Collection (ZGC) project"/>
        </authorList>
    </citation>
    <scope>NUCLEOTIDE SEQUENCE [LARGE SCALE MRNA]</scope>
    <source>
        <tissue>Embryo</tissue>
    </source>
</reference>
<organism>
    <name type="scientific">Danio rerio</name>
    <name type="common">Zebrafish</name>
    <name type="synonym">Brachydanio rerio</name>
    <dbReference type="NCBI Taxonomy" id="7955"/>
    <lineage>
        <taxon>Eukaryota</taxon>
        <taxon>Metazoa</taxon>
        <taxon>Chordata</taxon>
        <taxon>Craniata</taxon>
        <taxon>Vertebrata</taxon>
        <taxon>Euteleostomi</taxon>
        <taxon>Actinopterygii</taxon>
        <taxon>Neopterygii</taxon>
        <taxon>Teleostei</taxon>
        <taxon>Ostariophysi</taxon>
        <taxon>Cypriniformes</taxon>
        <taxon>Danionidae</taxon>
        <taxon>Danioninae</taxon>
        <taxon>Danio</taxon>
    </lineage>
</organism>
<protein>
    <recommendedName>
        <fullName evidence="1">Methionine aminopeptidase 1</fullName>
        <shortName evidence="1">MAP 1</shortName>
        <shortName evidence="1">MetAP 1</shortName>
        <ecNumber evidence="1">3.4.11.18</ecNumber>
    </recommendedName>
    <alternativeName>
        <fullName evidence="1">Peptidase M 1</fullName>
    </alternativeName>
</protein>
<evidence type="ECO:0000255" key="1">
    <source>
        <dbReference type="HAMAP-Rule" id="MF_03174"/>
    </source>
</evidence>
<evidence type="ECO:0000255" key="2">
    <source>
        <dbReference type="PROSITE-ProRule" id="PRU01357"/>
    </source>
</evidence>
<evidence type="ECO:0000305" key="3"/>
<dbReference type="EC" id="3.4.11.18" evidence="1"/>
<dbReference type="EMBL" id="BC076042">
    <property type="protein sequence ID" value="AAH76042.1"/>
    <property type="molecule type" value="mRNA"/>
</dbReference>
<dbReference type="EMBL" id="BC096796">
    <property type="protein sequence ID" value="AAH96796.1"/>
    <property type="molecule type" value="mRNA"/>
</dbReference>
<dbReference type="SMR" id="Q4QRK0"/>
<dbReference type="FunCoup" id="Q4QRK0">
    <property type="interactions" value="2061"/>
</dbReference>
<dbReference type="STRING" id="7955.ENSDARP00000113818"/>
<dbReference type="MEROPS" id="M24.017"/>
<dbReference type="PaxDb" id="7955-ENSDARP00000113818"/>
<dbReference type="AGR" id="ZFIN:ZDB-GENE-050626-124"/>
<dbReference type="ZFIN" id="ZDB-GENE-050626-124">
    <property type="gene designation" value="metap1"/>
</dbReference>
<dbReference type="eggNOG" id="KOG2738">
    <property type="taxonomic scope" value="Eukaryota"/>
</dbReference>
<dbReference type="InParanoid" id="Q4QRK0"/>
<dbReference type="OrthoDB" id="3209743at2759"/>
<dbReference type="PhylomeDB" id="Q4QRK0"/>
<dbReference type="Reactome" id="R-DRE-2514859">
    <property type="pathway name" value="Inactivation, recovery and regulation of the phototransduction cascade"/>
</dbReference>
<dbReference type="PRO" id="PR:Q4QRK0"/>
<dbReference type="Proteomes" id="UP000000437">
    <property type="component" value="Unplaced"/>
</dbReference>
<dbReference type="GO" id="GO:0005829">
    <property type="term" value="C:cytosol"/>
    <property type="evidence" value="ECO:0000318"/>
    <property type="project" value="GO_Central"/>
</dbReference>
<dbReference type="GO" id="GO:0022626">
    <property type="term" value="C:cytosolic ribosome"/>
    <property type="evidence" value="ECO:0007669"/>
    <property type="project" value="UniProtKB-UniRule"/>
</dbReference>
<dbReference type="GO" id="GO:0004239">
    <property type="term" value="F:initiator methionyl aminopeptidase activity"/>
    <property type="evidence" value="ECO:0000250"/>
    <property type="project" value="UniProtKB"/>
</dbReference>
<dbReference type="GO" id="GO:0070006">
    <property type="term" value="F:metalloaminopeptidase activity"/>
    <property type="evidence" value="ECO:0000318"/>
    <property type="project" value="GO_Central"/>
</dbReference>
<dbReference type="GO" id="GO:0008270">
    <property type="term" value="F:zinc ion binding"/>
    <property type="evidence" value="ECO:0007669"/>
    <property type="project" value="UniProtKB-KW"/>
</dbReference>
<dbReference type="GO" id="GO:0006882">
    <property type="term" value="P:intracellular zinc ion homeostasis"/>
    <property type="evidence" value="ECO:0000315"/>
    <property type="project" value="ZFIN"/>
</dbReference>
<dbReference type="GO" id="GO:0016485">
    <property type="term" value="P:protein processing"/>
    <property type="evidence" value="ECO:0000250"/>
    <property type="project" value="UniProtKB"/>
</dbReference>
<dbReference type="CDD" id="cd01086">
    <property type="entry name" value="MetAP1"/>
    <property type="match status" value="1"/>
</dbReference>
<dbReference type="FunFam" id="3.90.230.10:FF:000010">
    <property type="entry name" value="Methionine aminopeptidase"/>
    <property type="match status" value="1"/>
</dbReference>
<dbReference type="Gene3D" id="3.90.230.10">
    <property type="entry name" value="Creatinase/methionine aminopeptidase superfamily"/>
    <property type="match status" value="1"/>
</dbReference>
<dbReference type="HAMAP" id="MF_01974">
    <property type="entry name" value="MetAP_1"/>
    <property type="match status" value="1"/>
</dbReference>
<dbReference type="InterPro" id="IPR036005">
    <property type="entry name" value="Creatinase/aminopeptidase-like"/>
</dbReference>
<dbReference type="InterPro" id="IPR000994">
    <property type="entry name" value="Pept_M24"/>
</dbReference>
<dbReference type="InterPro" id="IPR001714">
    <property type="entry name" value="Pept_M24_MAP"/>
</dbReference>
<dbReference type="InterPro" id="IPR002467">
    <property type="entry name" value="Pept_M24A_MAP1"/>
</dbReference>
<dbReference type="InterPro" id="IPR031615">
    <property type="entry name" value="Zfn-C6H2"/>
</dbReference>
<dbReference type="NCBIfam" id="TIGR00500">
    <property type="entry name" value="met_pdase_I"/>
    <property type="match status" value="1"/>
</dbReference>
<dbReference type="PANTHER" id="PTHR43330">
    <property type="entry name" value="METHIONINE AMINOPEPTIDASE"/>
    <property type="match status" value="1"/>
</dbReference>
<dbReference type="PANTHER" id="PTHR43330:SF7">
    <property type="entry name" value="METHIONINE AMINOPEPTIDASE 1"/>
    <property type="match status" value="1"/>
</dbReference>
<dbReference type="Pfam" id="PF00557">
    <property type="entry name" value="Peptidase_M24"/>
    <property type="match status" value="1"/>
</dbReference>
<dbReference type="Pfam" id="PF15801">
    <property type="entry name" value="zf-C6H2"/>
    <property type="match status" value="1"/>
</dbReference>
<dbReference type="PRINTS" id="PR00599">
    <property type="entry name" value="MAPEPTIDASE"/>
</dbReference>
<dbReference type="SUPFAM" id="SSF55920">
    <property type="entry name" value="Creatinase/aminopeptidase"/>
    <property type="match status" value="1"/>
</dbReference>
<dbReference type="PROSITE" id="PS00680">
    <property type="entry name" value="MAP_1"/>
    <property type="match status" value="1"/>
</dbReference>
<dbReference type="PROSITE" id="PS52013">
    <property type="entry name" value="ZF_C6H2"/>
    <property type="match status" value="1"/>
</dbReference>
<gene>
    <name type="primary">metap1</name>
</gene>
<keyword id="KW-0031">Aminopeptidase</keyword>
<keyword id="KW-0963">Cytoplasm</keyword>
<keyword id="KW-0378">Hydrolase</keyword>
<keyword id="KW-0479">Metal-binding</keyword>
<keyword id="KW-0645">Protease</keyword>
<keyword id="KW-1185">Reference proteome</keyword>
<keyword id="KW-0862">Zinc</keyword>
<keyword id="KW-0863">Zinc-finger</keyword>
<feature type="chain" id="PRO_0000323737" description="Methionine aminopeptidase 1">
    <location>
        <begin position="1"/>
        <end position="386"/>
    </location>
</feature>
<feature type="zinc finger region" description="C6H2-type" evidence="2">
    <location>
        <begin position="6"/>
        <end position="59"/>
    </location>
</feature>
<feature type="binding site" evidence="1">
    <location>
        <position position="9"/>
    </location>
    <ligand>
        <name>Zn(2+)</name>
        <dbReference type="ChEBI" id="CHEBI:29105"/>
        <label>1</label>
    </ligand>
</feature>
<feature type="binding site" evidence="1">
    <location>
        <position position="14"/>
    </location>
    <ligand>
        <name>Zn(2+)</name>
        <dbReference type="ChEBI" id="CHEBI:29105"/>
        <label>1</label>
    </ligand>
</feature>
<feature type="binding site" evidence="1">
    <location>
        <position position="22"/>
    </location>
    <ligand>
        <name>Zn(2+)</name>
        <dbReference type="ChEBI" id="CHEBI:29105"/>
        <label>2</label>
    </ligand>
</feature>
<feature type="binding site" evidence="1">
    <location>
        <position position="25"/>
    </location>
    <ligand>
        <name>Zn(2+)</name>
        <dbReference type="ChEBI" id="CHEBI:29105"/>
        <label>2</label>
    </ligand>
</feature>
<feature type="binding site" evidence="1">
    <location>
        <position position="36"/>
    </location>
    <ligand>
        <name>Zn(2+)</name>
        <dbReference type="ChEBI" id="CHEBI:29105"/>
        <label>1</label>
    </ligand>
</feature>
<feature type="binding site" evidence="1">
    <location>
        <position position="40"/>
    </location>
    <ligand>
        <name>Zn(2+)</name>
        <dbReference type="ChEBI" id="CHEBI:29105"/>
        <label>1</label>
    </ligand>
</feature>
<feature type="binding site" evidence="1">
    <location>
        <position position="48"/>
    </location>
    <ligand>
        <name>Zn(2+)</name>
        <dbReference type="ChEBI" id="CHEBI:29105"/>
        <label>2</label>
    </ligand>
</feature>
<feature type="binding site" evidence="1">
    <location>
        <position position="52"/>
    </location>
    <ligand>
        <name>Zn(2+)</name>
        <dbReference type="ChEBI" id="CHEBI:29105"/>
        <label>2</label>
    </ligand>
</feature>
<feature type="binding site" evidence="1">
    <location>
        <position position="202"/>
    </location>
    <ligand>
        <name>a protein</name>
        <dbReference type="ChEBI" id="CHEBI:16541"/>
    </ligand>
    <ligandPart>
        <name>N-terminal L-methionine residue</name>
        <dbReference type="ChEBI" id="CHEBI:64731"/>
    </ligandPart>
</feature>
<feature type="binding site" evidence="1">
    <location>
        <position position="219"/>
    </location>
    <ligand>
        <name>Zn(2+)</name>
        <dbReference type="ChEBI" id="CHEBI:29105"/>
        <label>3</label>
    </ligand>
</feature>
<feature type="binding site" evidence="1">
    <location>
        <position position="230"/>
    </location>
    <ligand>
        <name>Zn(2+)</name>
        <dbReference type="ChEBI" id="CHEBI:29105"/>
        <label>3</label>
    </ligand>
</feature>
<feature type="binding site" evidence="1">
    <location>
        <position position="230"/>
    </location>
    <ligand>
        <name>Zn(2+)</name>
        <dbReference type="ChEBI" id="CHEBI:29105"/>
        <label>4</label>
        <note>catalytic</note>
    </ligand>
</feature>
<feature type="binding site" evidence="1">
    <location>
        <position position="293"/>
    </location>
    <ligand>
        <name>Zn(2+)</name>
        <dbReference type="ChEBI" id="CHEBI:29105"/>
        <label>4</label>
        <note>catalytic</note>
    </ligand>
</feature>
<feature type="binding site" evidence="1">
    <location>
        <position position="300"/>
    </location>
    <ligand>
        <name>a protein</name>
        <dbReference type="ChEBI" id="CHEBI:16541"/>
    </ligand>
    <ligandPart>
        <name>N-terminal L-methionine residue</name>
        <dbReference type="ChEBI" id="CHEBI:64731"/>
    </ligandPart>
</feature>
<feature type="binding site" evidence="1">
    <location>
        <position position="326"/>
    </location>
    <ligand>
        <name>Zn(2+)</name>
        <dbReference type="ChEBI" id="CHEBI:29105"/>
        <label>4</label>
        <note>catalytic</note>
    </ligand>
</feature>
<feature type="binding site" evidence="1">
    <location>
        <position position="357"/>
    </location>
    <ligand>
        <name>Zn(2+)</name>
        <dbReference type="ChEBI" id="CHEBI:29105"/>
        <label>3</label>
    </ligand>
</feature>
<feature type="binding site" evidence="1">
    <location>
        <position position="357"/>
    </location>
    <ligand>
        <name>Zn(2+)</name>
        <dbReference type="ChEBI" id="CHEBI:29105"/>
        <label>4</label>
        <note>catalytic</note>
    </ligand>
</feature>
<feature type="sequence conflict" description="In Ref. 1; AAH96796." evidence="3" ref="1">
    <original>I</original>
    <variation>T</variation>
    <location>
        <position position="275"/>
    </location>
</feature>
<comment type="function">
    <text evidence="1">Cotranslationally removes the N-terminal methionine from nascent proteins. The N-terminal methionine is often cleaved when the second residue in the primary sequence is small and uncharged (Met-Ala-, Cys, Gly, Pro, Ser, Thr, or Val).</text>
</comment>
<comment type="catalytic activity">
    <reaction evidence="1">
        <text>Release of N-terminal amino acids, preferentially methionine, from peptides and arylamides.</text>
        <dbReference type="EC" id="3.4.11.18"/>
    </reaction>
</comment>
<comment type="cofactor">
    <cofactor evidence="1">
        <name>Zn(2+)</name>
        <dbReference type="ChEBI" id="CHEBI:29105"/>
    </cofactor>
    <cofactor evidence="1">
        <name>Co(2+)</name>
        <dbReference type="ChEBI" id="CHEBI:48828"/>
    </cofactor>
    <cofactor evidence="1">
        <name>Mn(2+)</name>
        <dbReference type="ChEBI" id="CHEBI:29035"/>
    </cofactor>
    <cofactor evidence="1">
        <name>Fe(2+)</name>
        <dbReference type="ChEBI" id="CHEBI:29033"/>
    </cofactor>
    <text evidence="1">Binds 2 divalent metal cations per subunit. Has a high-affinity and a low affinity metal-binding site. The true nature of the physiological cofactor is under debate. The enzyme is active with zinc, cobalt, manganese or divalent iron ions. Has high activity with zinc; zinc cofactor is transferred into the active site region by the ZNG1 zinc chaperone.</text>
</comment>
<comment type="subunit">
    <text evidence="1">Associates with the 60S ribosomal subunit of the 80S translational complex.</text>
</comment>
<comment type="subcellular location">
    <subcellularLocation>
        <location evidence="1">Cytoplasm</location>
    </subcellularLocation>
</comment>
<comment type="similarity">
    <text evidence="1">Belongs to the peptidase M24A family. Methionine aminopeptidase type 1 subfamily.</text>
</comment>
<proteinExistence type="evidence at transcript level"/>
<accession>Q4QRK0</accession>
<accession>Q6DHD3</accession>